<organism>
    <name type="scientific">Pyricularia oryzae (strain 70-15 / ATCC MYA-4617 / FGSC 8958)</name>
    <name type="common">Rice blast fungus</name>
    <name type="synonym">Magnaporthe oryzae</name>
    <dbReference type="NCBI Taxonomy" id="242507"/>
    <lineage>
        <taxon>Eukaryota</taxon>
        <taxon>Fungi</taxon>
        <taxon>Dikarya</taxon>
        <taxon>Ascomycota</taxon>
        <taxon>Pezizomycotina</taxon>
        <taxon>Sordariomycetes</taxon>
        <taxon>Sordariomycetidae</taxon>
        <taxon>Magnaporthales</taxon>
        <taxon>Pyriculariaceae</taxon>
        <taxon>Pyricularia</taxon>
    </lineage>
</organism>
<name>BAS4_PYRO7</name>
<sequence length="102" mass="11088">MQLSFSAIAILLAFAVNHATADSHQNLVCVRTYPDNNSAENLEATRCACDWLKKNGKCDDCTIWENRLCHSDAKSLDGNEFEDACVRKCPNLGATGSSIPPA</sequence>
<gene>
    <name evidence="6" type="primary">BAS4</name>
    <name type="ORF">MGG_10914</name>
</gene>
<keyword id="KW-0325">Glycoprotein</keyword>
<keyword id="KW-1185">Reference proteome</keyword>
<keyword id="KW-0964">Secreted</keyword>
<keyword id="KW-0732">Signal</keyword>
<proteinExistence type="evidence at transcript level"/>
<accession>G5EI20</accession>
<evidence type="ECO:0000255" key="1"/>
<evidence type="ECO:0000255" key="2">
    <source>
        <dbReference type="PROSITE-ProRule" id="PRU00498"/>
    </source>
</evidence>
<evidence type="ECO:0000269" key="3">
    <source>
    </source>
</evidence>
<evidence type="ECO:0000269" key="4">
    <source>
    </source>
</evidence>
<evidence type="ECO:0000269" key="5">
    <source>
    </source>
</evidence>
<evidence type="ECO:0000303" key="6">
    <source>
    </source>
</evidence>
<dbReference type="EMBL" id="FJ807767">
    <property type="protein sequence ID" value="ACQ73209.1"/>
    <property type="molecule type" value="Genomic_DNA"/>
</dbReference>
<dbReference type="EMBL" id="CM001235">
    <property type="protein sequence ID" value="EHA48095.1"/>
    <property type="molecule type" value="Genomic_DNA"/>
</dbReference>
<dbReference type="RefSeq" id="XP_003717679.1">
    <property type="nucleotide sequence ID" value="XM_003717631.1"/>
</dbReference>
<dbReference type="STRING" id="242507.G5EI20"/>
<dbReference type="GlyCosmos" id="G5EI20">
    <property type="glycosylation" value="1 site, No reported glycans"/>
</dbReference>
<dbReference type="EnsemblFungi" id="MGG_10914T0">
    <property type="protein sequence ID" value="MGG_10914T0"/>
    <property type="gene ID" value="MGG_10914"/>
</dbReference>
<dbReference type="GeneID" id="2677066"/>
<dbReference type="KEGG" id="mgr:MGG_10914"/>
<dbReference type="VEuPathDB" id="FungiDB:MGG_10914"/>
<dbReference type="HOGENOM" id="CLU_2278030_0_0_1"/>
<dbReference type="InParanoid" id="G5EI20"/>
<dbReference type="OrthoDB" id="5219816at2759"/>
<dbReference type="PHI-base" id="PHI:9211"/>
<dbReference type="Proteomes" id="UP000009058">
    <property type="component" value="Chromosome 5"/>
</dbReference>
<dbReference type="GO" id="GO:0005576">
    <property type="term" value="C:extracellular region"/>
    <property type="evidence" value="ECO:0007669"/>
    <property type="project" value="UniProtKB-SubCell"/>
</dbReference>
<comment type="function">
    <text evidence="3 5">Secreted effector involved in biotrophic colonization of plant cells (PubMed:19357089). Participates in transition from the biotrophic to the necrotrophic phase of Magnaporthe oryzae (PubMed:31049006). Elicits rice basic defense responses during the early stage of interaction and promotes cell death in the late stage of compatible interaction (PubMed:19357089).</text>
</comment>
<comment type="subcellular location">
    <subcellularLocation>
        <location evidence="3 4">Secreted</location>
    </subcellularLocation>
    <text evidence="3 4">Localizes to the extra-invasive hyphal membrane (EIHM) matrix.</text>
</comment>
<comment type="induction">
    <text evidence="3">Expression is highly up-regulated in invasive hyphae.</text>
</comment>
<protein>
    <recommendedName>
        <fullName evidence="6">Biotrophy-associated secreted protein 4</fullName>
    </recommendedName>
</protein>
<feature type="signal peptide" evidence="1">
    <location>
        <begin position="1"/>
        <end position="21"/>
    </location>
</feature>
<feature type="chain" id="PRO_5007915087" description="Biotrophy-associated secreted protein 4">
    <location>
        <begin position="22"/>
        <end position="102"/>
    </location>
</feature>
<feature type="glycosylation site" description="N-linked (GlcNAc...) asparagine" evidence="2">
    <location>
        <position position="36"/>
    </location>
</feature>
<reference key="1">
    <citation type="journal article" date="2009" name="Plant Cell">
        <title>Interaction transcriptome analysis identifies Magnaporthe oryzae BAS1-4 as Biotrophy-associated secreted proteins in rice blast disease.</title>
        <authorList>
            <person name="Mosquera G."/>
            <person name="Giraldo M.C."/>
            <person name="Khang C.H."/>
            <person name="Coughlan S."/>
            <person name="Valent B."/>
        </authorList>
    </citation>
    <scope>NUCLEOTIDE SEQUENCE [GENOMIC DNA]</scope>
    <scope>INDUCTION</scope>
    <scope>FUNCTION</scope>
    <scope>SUBCELLULAR LOCATION</scope>
    <source>
        <strain>70-15 / ATCC MYA-4617 / FGSC 8958</strain>
    </source>
</reference>
<reference key="2">
    <citation type="journal article" date="2005" name="Nature">
        <title>The genome sequence of the rice blast fungus Magnaporthe grisea.</title>
        <authorList>
            <person name="Dean R.A."/>
            <person name="Talbot N.J."/>
            <person name="Ebbole D.J."/>
            <person name="Farman M.L."/>
            <person name="Mitchell T.K."/>
            <person name="Orbach M.J."/>
            <person name="Thon M.R."/>
            <person name="Kulkarni R."/>
            <person name="Xu J.-R."/>
            <person name="Pan H."/>
            <person name="Read N.D."/>
            <person name="Lee Y.-H."/>
            <person name="Carbone I."/>
            <person name="Brown D."/>
            <person name="Oh Y.Y."/>
            <person name="Donofrio N."/>
            <person name="Jeong J.S."/>
            <person name="Soanes D.M."/>
            <person name="Djonovic S."/>
            <person name="Kolomiets E."/>
            <person name="Rehmeyer C."/>
            <person name="Li W."/>
            <person name="Harding M."/>
            <person name="Kim S."/>
            <person name="Lebrun M.-H."/>
            <person name="Bohnert H."/>
            <person name="Coughlan S."/>
            <person name="Butler J."/>
            <person name="Calvo S.E."/>
            <person name="Ma L.-J."/>
            <person name="Nicol R."/>
            <person name="Purcell S."/>
            <person name="Nusbaum C."/>
            <person name="Galagan J.E."/>
            <person name="Birren B.W."/>
        </authorList>
    </citation>
    <scope>NUCLEOTIDE SEQUENCE [LARGE SCALE GENOMIC DNA]</scope>
    <source>
        <strain>70-15 / ATCC MYA-4617 / FGSC 8958</strain>
    </source>
</reference>
<reference key="3">
    <citation type="journal article" date="2010" name="Plant Cell">
        <title>Translocation of Magnaporthe oryzae effectors into rice cells and their subsequent cell-to-cell movement.</title>
        <authorList>
            <person name="Khang C.H."/>
            <person name="Berruyer R."/>
            <person name="Giraldo M.C."/>
            <person name="Kankanala P."/>
            <person name="Park S.Y."/>
            <person name="Czymmek K."/>
            <person name="Kang S."/>
            <person name="Valent B."/>
        </authorList>
    </citation>
    <scope>SUBCELLULAR LOCATION</scope>
</reference>
<reference key="4">
    <citation type="journal article" date="2019" name="Saudi J. Biol. Sci.">
        <title>The biotrophy-associated secreted protein 4 (BAS4) participates in the transition of Magnaporthe oryzae from the biotrophic to the necrotrophic phase.</title>
        <authorList>
            <person name="Wang C."/>
            <person name="Liu Y."/>
            <person name="Liu L."/>
            <person name="Wang Y."/>
            <person name="Yan J."/>
            <person name="Wang C."/>
            <person name="Li C."/>
            <person name="Yang J."/>
        </authorList>
    </citation>
    <scope>FUNCTION</scope>
    <scope>SUBCELLULAR LOCATION</scope>
</reference>